<keyword id="KW-0004">4Fe-4S</keyword>
<keyword id="KW-0148">Chlorophyll</keyword>
<keyword id="KW-0150">Chloroplast</keyword>
<keyword id="KW-0157">Chromophore</keyword>
<keyword id="KW-0249">Electron transport</keyword>
<keyword id="KW-0408">Iron</keyword>
<keyword id="KW-0411">Iron-sulfur</keyword>
<keyword id="KW-0460">Magnesium</keyword>
<keyword id="KW-0472">Membrane</keyword>
<keyword id="KW-0479">Metal-binding</keyword>
<keyword id="KW-0560">Oxidoreductase</keyword>
<keyword id="KW-0602">Photosynthesis</keyword>
<keyword id="KW-0603">Photosystem I</keyword>
<keyword id="KW-0934">Plastid</keyword>
<keyword id="KW-0793">Thylakoid</keyword>
<keyword id="KW-0812">Transmembrane</keyword>
<keyword id="KW-1133">Transmembrane helix</keyword>
<keyword id="KW-0813">Transport</keyword>
<geneLocation type="chloroplast"/>
<name>PSAB_STIHE</name>
<feature type="chain" id="PRO_0000277137" description="Photosystem I P700 chlorophyll a apoprotein A2">
    <location>
        <begin position="1"/>
        <end position="735"/>
    </location>
</feature>
<feature type="transmembrane region" description="Helical; Name=I" evidence="1">
    <location>
        <begin position="47"/>
        <end position="70"/>
    </location>
</feature>
<feature type="transmembrane region" description="Helical; Name=II" evidence="1">
    <location>
        <begin position="136"/>
        <end position="159"/>
    </location>
</feature>
<feature type="transmembrane region" description="Helical; Name=III" evidence="1">
    <location>
        <begin position="176"/>
        <end position="200"/>
    </location>
</feature>
<feature type="transmembrane region" description="Helical; Name=IV" evidence="1">
    <location>
        <begin position="274"/>
        <end position="292"/>
    </location>
</feature>
<feature type="transmembrane region" description="Helical; Name=V" evidence="1">
    <location>
        <begin position="331"/>
        <end position="354"/>
    </location>
</feature>
<feature type="transmembrane region" description="Helical; Name=VI" evidence="1">
    <location>
        <begin position="370"/>
        <end position="396"/>
    </location>
</feature>
<feature type="transmembrane region" description="Helical; Name=VII" evidence="1">
    <location>
        <begin position="418"/>
        <end position="440"/>
    </location>
</feature>
<feature type="transmembrane region" description="Helical; Name=VIII" evidence="1">
    <location>
        <begin position="518"/>
        <end position="536"/>
    </location>
</feature>
<feature type="transmembrane region" description="Helical; Name=IX" evidence="1">
    <location>
        <begin position="576"/>
        <end position="597"/>
    </location>
</feature>
<feature type="transmembrane region" description="Helical; Name=X" evidence="1">
    <location>
        <begin position="644"/>
        <end position="666"/>
    </location>
</feature>
<feature type="transmembrane region" description="Helical; Name=XI" evidence="1">
    <location>
        <begin position="708"/>
        <end position="728"/>
    </location>
</feature>
<feature type="binding site" evidence="1">
    <location>
        <position position="560"/>
    </location>
    <ligand>
        <name>[4Fe-4S] cluster</name>
        <dbReference type="ChEBI" id="CHEBI:49883"/>
        <note>ligand shared between dimeric partners</note>
    </ligand>
</feature>
<feature type="binding site" evidence="1">
    <location>
        <position position="569"/>
    </location>
    <ligand>
        <name>[4Fe-4S] cluster</name>
        <dbReference type="ChEBI" id="CHEBI:49883"/>
        <note>ligand shared between dimeric partners</note>
    </ligand>
</feature>
<feature type="binding site" description="axial binding residue" evidence="1">
    <location>
        <position position="655"/>
    </location>
    <ligand>
        <name>chlorophyll a</name>
        <dbReference type="ChEBI" id="CHEBI:58416"/>
        <label>B1</label>
    </ligand>
    <ligandPart>
        <name>Mg</name>
        <dbReference type="ChEBI" id="CHEBI:25107"/>
    </ligandPart>
</feature>
<feature type="binding site" description="axial binding residue" evidence="1">
    <location>
        <position position="663"/>
    </location>
    <ligand>
        <name>chlorophyll a</name>
        <dbReference type="ChEBI" id="CHEBI:58416"/>
        <label>B3</label>
    </ligand>
    <ligandPart>
        <name>Mg</name>
        <dbReference type="ChEBI" id="CHEBI:25107"/>
    </ligandPart>
</feature>
<feature type="binding site" evidence="1">
    <location>
        <position position="671"/>
    </location>
    <ligand>
        <name>chlorophyll a</name>
        <dbReference type="ChEBI" id="CHEBI:58416"/>
        <label>B3</label>
    </ligand>
</feature>
<feature type="binding site" evidence="1">
    <location>
        <position position="672"/>
    </location>
    <ligand>
        <name>phylloquinone</name>
        <dbReference type="ChEBI" id="CHEBI:18067"/>
        <label>B</label>
    </ligand>
</feature>
<dbReference type="EC" id="1.97.1.12" evidence="1"/>
<dbReference type="EMBL" id="DQ630521">
    <property type="protein sequence ID" value="ABF60163.1"/>
    <property type="molecule type" value="Genomic_DNA"/>
</dbReference>
<dbReference type="RefSeq" id="YP_764416.1">
    <property type="nucleotide sequence ID" value="NC_008372.1"/>
</dbReference>
<dbReference type="SMR" id="Q06SF0"/>
<dbReference type="GeneID" id="4308406"/>
<dbReference type="GO" id="GO:0009535">
    <property type="term" value="C:chloroplast thylakoid membrane"/>
    <property type="evidence" value="ECO:0007669"/>
    <property type="project" value="UniProtKB-SubCell"/>
</dbReference>
<dbReference type="GO" id="GO:0009522">
    <property type="term" value="C:photosystem I"/>
    <property type="evidence" value="ECO:0007669"/>
    <property type="project" value="UniProtKB-KW"/>
</dbReference>
<dbReference type="GO" id="GO:0051539">
    <property type="term" value="F:4 iron, 4 sulfur cluster binding"/>
    <property type="evidence" value="ECO:0007669"/>
    <property type="project" value="UniProtKB-KW"/>
</dbReference>
<dbReference type="GO" id="GO:0016168">
    <property type="term" value="F:chlorophyll binding"/>
    <property type="evidence" value="ECO:0007669"/>
    <property type="project" value="UniProtKB-KW"/>
</dbReference>
<dbReference type="GO" id="GO:0009055">
    <property type="term" value="F:electron transfer activity"/>
    <property type="evidence" value="ECO:0007669"/>
    <property type="project" value="UniProtKB-UniRule"/>
</dbReference>
<dbReference type="GO" id="GO:0000287">
    <property type="term" value="F:magnesium ion binding"/>
    <property type="evidence" value="ECO:0007669"/>
    <property type="project" value="UniProtKB-UniRule"/>
</dbReference>
<dbReference type="GO" id="GO:0016491">
    <property type="term" value="F:oxidoreductase activity"/>
    <property type="evidence" value="ECO:0007669"/>
    <property type="project" value="UniProtKB-KW"/>
</dbReference>
<dbReference type="GO" id="GO:0015979">
    <property type="term" value="P:photosynthesis"/>
    <property type="evidence" value="ECO:0007669"/>
    <property type="project" value="UniProtKB-UniRule"/>
</dbReference>
<dbReference type="FunFam" id="1.20.1130.10:FF:000001">
    <property type="entry name" value="Photosystem I P700 chlorophyll a apoprotein A2"/>
    <property type="match status" value="1"/>
</dbReference>
<dbReference type="Gene3D" id="1.20.1130.10">
    <property type="entry name" value="Photosystem I PsaA/PsaB"/>
    <property type="match status" value="1"/>
</dbReference>
<dbReference type="HAMAP" id="MF_00482">
    <property type="entry name" value="PSI_PsaB"/>
    <property type="match status" value="1"/>
</dbReference>
<dbReference type="InterPro" id="IPR001280">
    <property type="entry name" value="PSI_PsaA/B"/>
</dbReference>
<dbReference type="InterPro" id="IPR020586">
    <property type="entry name" value="PSI_PsaA/B_CS"/>
</dbReference>
<dbReference type="InterPro" id="IPR036408">
    <property type="entry name" value="PSI_PsaA/B_sf"/>
</dbReference>
<dbReference type="InterPro" id="IPR006244">
    <property type="entry name" value="PSI_PsaB"/>
</dbReference>
<dbReference type="NCBIfam" id="TIGR01336">
    <property type="entry name" value="psaB"/>
    <property type="match status" value="1"/>
</dbReference>
<dbReference type="PANTHER" id="PTHR30128">
    <property type="entry name" value="OUTER MEMBRANE PROTEIN, OMPA-RELATED"/>
    <property type="match status" value="1"/>
</dbReference>
<dbReference type="PANTHER" id="PTHR30128:SF19">
    <property type="entry name" value="PHOTOSYSTEM I P700 CHLOROPHYLL A APOPROTEIN A1-RELATED"/>
    <property type="match status" value="1"/>
</dbReference>
<dbReference type="Pfam" id="PF00223">
    <property type="entry name" value="PsaA_PsaB"/>
    <property type="match status" value="1"/>
</dbReference>
<dbReference type="PIRSF" id="PIRSF002905">
    <property type="entry name" value="PSI_A"/>
    <property type="match status" value="1"/>
</dbReference>
<dbReference type="PRINTS" id="PR00257">
    <property type="entry name" value="PHOTSYSPSAAB"/>
</dbReference>
<dbReference type="SUPFAM" id="SSF81558">
    <property type="entry name" value="Photosystem I subunits PsaA/PsaB"/>
    <property type="match status" value="1"/>
</dbReference>
<dbReference type="PROSITE" id="PS00419">
    <property type="entry name" value="PHOTOSYSTEM_I_PSAAB"/>
    <property type="match status" value="1"/>
</dbReference>
<protein>
    <recommendedName>
        <fullName evidence="1">Photosystem I P700 chlorophyll a apoprotein A2</fullName>
        <ecNumber evidence="1">1.97.1.12</ecNumber>
    </recommendedName>
    <alternativeName>
        <fullName evidence="1">PSI-B</fullName>
    </alternativeName>
    <alternativeName>
        <fullName evidence="1">PsaB</fullName>
    </alternativeName>
</protein>
<proteinExistence type="inferred from homology"/>
<comment type="function">
    <text evidence="1">PsaA and PsaB bind P700, the primary electron donor of photosystem I (PSI), as well as the electron acceptors A0, A1 and FX. PSI is a plastocyanin/cytochrome c6-ferredoxin oxidoreductase, converting photonic excitation into a charge separation, which transfers an electron from the donor P700 chlorophyll pair to the spectroscopically characterized acceptors A0, A1, FX, FA and FB in turn. Oxidized P700 is reduced on the lumenal side of the thylakoid membrane by plastocyanin or cytochrome c6.</text>
</comment>
<comment type="catalytic activity">
    <reaction evidence="1">
        <text>reduced [plastocyanin] + hnu + oxidized [2Fe-2S]-[ferredoxin] = oxidized [plastocyanin] + reduced [2Fe-2S]-[ferredoxin]</text>
        <dbReference type="Rhea" id="RHEA:30407"/>
        <dbReference type="Rhea" id="RHEA-COMP:10000"/>
        <dbReference type="Rhea" id="RHEA-COMP:10001"/>
        <dbReference type="Rhea" id="RHEA-COMP:10039"/>
        <dbReference type="Rhea" id="RHEA-COMP:10040"/>
        <dbReference type="ChEBI" id="CHEBI:29036"/>
        <dbReference type="ChEBI" id="CHEBI:30212"/>
        <dbReference type="ChEBI" id="CHEBI:33737"/>
        <dbReference type="ChEBI" id="CHEBI:33738"/>
        <dbReference type="ChEBI" id="CHEBI:49552"/>
        <dbReference type="EC" id="1.97.1.12"/>
    </reaction>
</comment>
<comment type="cofactor">
    <text evidence="1">P700 is a chlorophyll a/chlorophyll a' dimer, A0 is one or more chlorophyll a, A1 is one or both phylloquinones and FX is a shared 4Fe-4S iron-sulfur center.</text>
</comment>
<comment type="subunit">
    <text evidence="1">The PsaA/B heterodimer binds the P700 chlorophyll special pair and subsequent electron acceptors. PSI consists of a core antenna complex that captures photons, and an electron transfer chain that converts photonic excitation into a charge separation. The eukaryotic PSI reaction center is composed of at least 11 subunits.</text>
</comment>
<comment type="subcellular location">
    <subcellularLocation>
        <location>Plastid</location>
        <location>Chloroplast thylakoid membrane</location>
        <topology>Multi-pass membrane protein</topology>
    </subcellularLocation>
</comment>
<comment type="similarity">
    <text evidence="1">Belongs to the PsaA/PsaB family.</text>
</comment>
<reference key="1">
    <citation type="journal article" date="2006" name="Mol. Genet. Genomics">
        <title>Distinctive architecture of the chloroplast genome in the chlorophycean green alga Stigeoclonium helveticum.</title>
        <authorList>
            <person name="Belanger A.-S."/>
            <person name="Brouard J.-S."/>
            <person name="Charlebois P."/>
            <person name="Otis C."/>
            <person name="Lemieux C."/>
            <person name="Turmel M."/>
        </authorList>
    </citation>
    <scope>NUCLEOTIDE SEQUENCE [LARGE SCALE GENOMIC DNA]</scope>
    <source>
        <strain>UTEX 441</strain>
    </source>
</reference>
<sequence length="735" mass="81935">MATKVFPSFSKGLAQDPTTRRIWFGIATAHDFESHDGMTEELVYQKIFASHFGQLSIIFLWTSGNLFHVAWQGNFEQWVQDPLHVRPIAHAIWDPHFGQPAVEAFTRGGATGPVNIATSGVYQWWYTIGLRANQDLYNGSLFLSILSALFLLAGWLHLQKNFRPSLSWFKDAESRLNHHLSGLFGISSLAWTGHLVHVAIPASRGQRVGWDNFLTTLPHPQGLAPLWTGNWAAYAQNPDSASHIFSTSQGSGQAILTFLGGFHPQTQSLWLSDMAHHHLAIAVIFVLAGHMYRTSFGIGHRLSDILDSHVAPSGNMGGGHRGLFETINNSLHFQLGLALASVGTICSLVAQHMYSLPPYAYLANDFTTQAALYTHHQYIASFIICGAFAHGAIFFIRDYDPEQNKGNVLARMLDHKEAIISHLSWVSLFLGFHTLGLYVHNDVMQAFGTPEKQILIEPVFAQWIQASHGKALYGFDVLLSSSGSVAFSASQTLWLPGWLDAINNNSNSLFLNIGPGDFLVHHAIALGLHTTTLILVKGALDARGSKLMPDKKDFGYSFPCDGPGRGGTCDISAYDAFYLSIFWSLNTVGWVTFYWHWKHLTLWQGNVAQFDESSTYIMGWLRDYLWLNSSQLINGYNPFGMNSLSVWAWVFLFGHLIYATGFMFLISWRGYWQELIETLVWSHEKTPIANLVQWVDKPVALSIVQARLVGLVHFSVGYIFTYAAFLIASTSGKFG</sequence>
<evidence type="ECO:0000255" key="1">
    <source>
        <dbReference type="HAMAP-Rule" id="MF_00482"/>
    </source>
</evidence>
<accession>Q06SF0</accession>
<organism>
    <name type="scientific">Stigeoclonium helveticum</name>
    <name type="common">Green alga</name>
    <dbReference type="NCBI Taxonomy" id="55999"/>
    <lineage>
        <taxon>Eukaryota</taxon>
        <taxon>Viridiplantae</taxon>
        <taxon>Chlorophyta</taxon>
        <taxon>core chlorophytes</taxon>
        <taxon>Chlorophyceae</taxon>
        <taxon>OCC clade</taxon>
        <taxon>Chaetophorales</taxon>
        <taxon>Chaetophoraceae</taxon>
        <taxon>Stigeoclonium</taxon>
    </lineage>
</organism>
<gene>
    <name evidence="1" type="primary">psaB</name>
</gene>